<protein>
    <recommendedName>
        <fullName>Actin filament-associated protein 1-like 1</fullName>
        <shortName>AFAP1-like protein 1</shortName>
    </recommendedName>
</protein>
<evidence type="ECO:0000250" key="1"/>
<evidence type="ECO:0000250" key="2">
    <source>
        <dbReference type="UniProtKB" id="Q8BZI0"/>
    </source>
</evidence>
<evidence type="ECO:0000255" key="3"/>
<evidence type="ECO:0000255" key="4">
    <source>
        <dbReference type="PROSITE-ProRule" id="PRU00145"/>
    </source>
</evidence>
<evidence type="ECO:0000256" key="5">
    <source>
        <dbReference type="SAM" id="MobiDB-lite"/>
    </source>
</evidence>
<evidence type="ECO:0007744" key="6">
    <source>
    </source>
</evidence>
<feature type="chain" id="PRO_0000416693" description="Actin filament-associated protein 1-like 1">
    <location>
        <begin position="1"/>
        <end position="767"/>
    </location>
</feature>
<feature type="domain" description="PH 1" evidence="4">
    <location>
        <begin position="219"/>
        <end position="315"/>
    </location>
</feature>
<feature type="domain" description="PH 2" evidence="4">
    <location>
        <begin position="417"/>
        <end position="511"/>
    </location>
</feature>
<feature type="region of interest" description="Disordered" evidence="5">
    <location>
        <begin position="83"/>
        <end position="145"/>
    </location>
</feature>
<feature type="region of interest" description="Disordered" evidence="5">
    <location>
        <begin position="164"/>
        <end position="210"/>
    </location>
</feature>
<feature type="region of interest" description="Disordered" evidence="5">
    <location>
        <begin position="341"/>
        <end position="381"/>
    </location>
</feature>
<feature type="region of interest" description="Disordered" evidence="5">
    <location>
        <begin position="563"/>
        <end position="605"/>
    </location>
</feature>
<feature type="region of interest" description="Disordered" evidence="5">
    <location>
        <begin position="704"/>
        <end position="767"/>
    </location>
</feature>
<feature type="coiled-coil region" evidence="3">
    <location>
        <begin position="610"/>
        <end position="700"/>
    </location>
</feature>
<feature type="compositionally biased region" description="Basic and acidic residues" evidence="5">
    <location>
        <begin position="83"/>
        <end position="97"/>
    </location>
</feature>
<feature type="compositionally biased region" description="Polar residues" evidence="5">
    <location>
        <begin position="164"/>
        <end position="173"/>
    </location>
</feature>
<feature type="compositionally biased region" description="Low complexity" evidence="5">
    <location>
        <begin position="174"/>
        <end position="189"/>
    </location>
</feature>
<feature type="compositionally biased region" description="Polar residues" evidence="5">
    <location>
        <begin position="349"/>
        <end position="362"/>
    </location>
</feature>
<feature type="compositionally biased region" description="Basic and acidic residues" evidence="5">
    <location>
        <begin position="586"/>
        <end position="595"/>
    </location>
</feature>
<feature type="compositionally biased region" description="Polar residues" evidence="5">
    <location>
        <begin position="709"/>
        <end position="733"/>
    </location>
</feature>
<feature type="compositionally biased region" description="Basic and acidic residues" evidence="5">
    <location>
        <begin position="758"/>
        <end position="767"/>
    </location>
</feature>
<feature type="modified residue" description="Phosphoserine" evidence="6">
    <location>
        <position position="87"/>
    </location>
</feature>
<feature type="modified residue" description="Phosphoserine" evidence="6">
    <location>
        <position position="93"/>
    </location>
</feature>
<feature type="modified residue" description="Phosphoserine" evidence="6">
    <location>
        <position position="97"/>
    </location>
</feature>
<feature type="modified residue" description="Phosphoserine" evidence="6">
    <location>
        <position position="103"/>
    </location>
</feature>
<feature type="modified residue" description="Phosphoserine" evidence="2">
    <location>
        <position position="152"/>
    </location>
</feature>
<feature type="modified residue" description="Phosphoserine" evidence="2">
    <location>
        <position position="328"/>
    </location>
</feature>
<feature type="modified residue" description="Phosphoserine" evidence="2">
    <location>
        <position position="342"/>
    </location>
</feature>
<feature type="modified residue" description="Phosphotyrosine" evidence="2">
    <location>
        <position position="556"/>
    </location>
</feature>
<feature type="modified residue" description="Phosphoserine" evidence="2">
    <location>
        <position position="746"/>
    </location>
</feature>
<keyword id="KW-0965">Cell junction</keyword>
<keyword id="KW-0966">Cell projection</keyword>
<keyword id="KW-0175">Coiled coil</keyword>
<keyword id="KW-0963">Cytoplasm</keyword>
<keyword id="KW-0597">Phosphoprotein</keyword>
<keyword id="KW-1185">Reference proteome</keyword>
<keyword id="KW-0677">Repeat</keyword>
<gene>
    <name type="primary">Afap1l1</name>
</gene>
<organism>
    <name type="scientific">Rattus norvegicus</name>
    <name type="common">Rat</name>
    <dbReference type="NCBI Taxonomy" id="10116"/>
    <lineage>
        <taxon>Eukaryota</taxon>
        <taxon>Metazoa</taxon>
        <taxon>Chordata</taxon>
        <taxon>Craniata</taxon>
        <taxon>Vertebrata</taxon>
        <taxon>Euteleostomi</taxon>
        <taxon>Mammalia</taxon>
        <taxon>Eutheria</taxon>
        <taxon>Euarchontoglires</taxon>
        <taxon>Glires</taxon>
        <taxon>Rodentia</taxon>
        <taxon>Myomorpha</taxon>
        <taxon>Muroidea</taxon>
        <taxon>Muridae</taxon>
        <taxon>Murinae</taxon>
        <taxon>Rattus</taxon>
    </lineage>
</organism>
<sequence>MDRSRVLEQLIPELTRLLSLLDHEYLSDSTLEKKMAVASLLQSLQPLPAKEVSFLYVNTADLHSGPSFVESLFEEFDCDLGDLRDMSDDGERSKEASPEPIKSPSLRSTADVPPPLPNKPPPEDYYEEALPLGPGKSPEYISSHNGCSPAQSIVDGYYEDADSSYPTTRMNGESKSSYNDSDAMSSSYESYDEEEEEEKGRQPKHQWPSEEASMHLVRDCRICAFLLRKKRFGQWAKQLTVIKEEQLLCYKSSKDRQPHLRLPLDVCTVVYVPKDSRHKRHELRFSQGATEVLVLALQSREQAEEWLKVIREVSRPIGGAESLEVPRSPVILCKLDQDKRLSQEKQNSDSDSLGMNDSSSTLSRREACEHGKGKKNSLAELKDSMSRAAGRKITRIISFSKKKALSEDLQTFSSEDEAPCCGYLNVLVNHGWKERWCRLRCNTLYFHKDRTDLHTHVNAIALRGCEVAPGFGPRHPFAFRILRNRQEVAILEASCSEDMGRWLGLLLVEMGSKVTPEALHYDYVDVETLTSIVSAGRNSFLYAQSCQDQWPEPRIYDEVPYEKVQDEEPQRPTGAQVKRHASSCSEKSHRADPQVKVKRHASSANQYKYGKNRAEEDARRYLVEKERLEKEKETIRTELTALRQEKKELKEAIRNNPGAKLKALEEAVATLDAQCRAKEEQRIDLELKLVAVKERLQQSLAGGPALGLSVSSKSKSQETTNKPQSSVPEQSLPVNCVSEMRKRSPSIVTSNQGRVLQKAKEWEMKKT</sequence>
<name>AF1L1_RAT</name>
<comment type="function">
    <text evidence="1">May be involved in podosome and invadosome formation.</text>
</comment>
<comment type="subunit">
    <text evidence="1">Interacts with CTTN.</text>
</comment>
<comment type="subcellular location">
    <subcellularLocation>
        <location evidence="1">Cytoplasm</location>
    </subcellularLocation>
    <subcellularLocation>
        <location evidence="1">Cell projection</location>
        <location evidence="1">Podosome</location>
    </subcellularLocation>
    <subcellularLocation>
        <location evidence="1">Cell projection</location>
        <location evidence="1">Invadopodium</location>
    </subcellularLocation>
</comment>
<reference key="1">
    <citation type="journal article" date="2004" name="Nature">
        <title>Genome sequence of the Brown Norway rat yields insights into mammalian evolution.</title>
        <authorList>
            <person name="Gibbs R.A."/>
            <person name="Weinstock G.M."/>
            <person name="Metzker M.L."/>
            <person name="Muzny D.M."/>
            <person name="Sodergren E.J."/>
            <person name="Scherer S."/>
            <person name="Scott G."/>
            <person name="Steffen D."/>
            <person name="Worley K.C."/>
            <person name="Burch P.E."/>
            <person name="Okwuonu G."/>
            <person name="Hines S."/>
            <person name="Lewis L."/>
            <person name="Deramo C."/>
            <person name="Delgado O."/>
            <person name="Dugan-Rocha S."/>
            <person name="Miner G."/>
            <person name="Morgan M."/>
            <person name="Hawes A."/>
            <person name="Gill R."/>
            <person name="Holt R.A."/>
            <person name="Adams M.D."/>
            <person name="Amanatides P.G."/>
            <person name="Baden-Tillson H."/>
            <person name="Barnstead M."/>
            <person name="Chin S."/>
            <person name="Evans C.A."/>
            <person name="Ferriera S."/>
            <person name="Fosler C."/>
            <person name="Glodek A."/>
            <person name="Gu Z."/>
            <person name="Jennings D."/>
            <person name="Kraft C.L."/>
            <person name="Nguyen T."/>
            <person name="Pfannkoch C.M."/>
            <person name="Sitter C."/>
            <person name="Sutton G.G."/>
            <person name="Venter J.C."/>
            <person name="Woodage T."/>
            <person name="Smith D."/>
            <person name="Lee H.-M."/>
            <person name="Gustafson E."/>
            <person name="Cahill P."/>
            <person name="Kana A."/>
            <person name="Doucette-Stamm L."/>
            <person name="Weinstock K."/>
            <person name="Fechtel K."/>
            <person name="Weiss R.B."/>
            <person name="Dunn D.M."/>
            <person name="Green E.D."/>
            <person name="Blakesley R.W."/>
            <person name="Bouffard G.G."/>
            <person name="De Jong P.J."/>
            <person name="Osoegawa K."/>
            <person name="Zhu B."/>
            <person name="Marra M."/>
            <person name="Schein J."/>
            <person name="Bosdet I."/>
            <person name="Fjell C."/>
            <person name="Jones S."/>
            <person name="Krzywinski M."/>
            <person name="Mathewson C."/>
            <person name="Siddiqui A."/>
            <person name="Wye N."/>
            <person name="McPherson J."/>
            <person name="Zhao S."/>
            <person name="Fraser C.M."/>
            <person name="Shetty J."/>
            <person name="Shatsman S."/>
            <person name="Geer K."/>
            <person name="Chen Y."/>
            <person name="Abramzon S."/>
            <person name="Nierman W.C."/>
            <person name="Havlak P.H."/>
            <person name="Chen R."/>
            <person name="Durbin K.J."/>
            <person name="Egan A."/>
            <person name="Ren Y."/>
            <person name="Song X.-Z."/>
            <person name="Li B."/>
            <person name="Liu Y."/>
            <person name="Qin X."/>
            <person name="Cawley S."/>
            <person name="Cooney A.J."/>
            <person name="D'Souza L.M."/>
            <person name="Martin K."/>
            <person name="Wu J.Q."/>
            <person name="Gonzalez-Garay M.L."/>
            <person name="Jackson A.R."/>
            <person name="Kalafus K.J."/>
            <person name="McLeod M.P."/>
            <person name="Milosavljevic A."/>
            <person name="Virk D."/>
            <person name="Volkov A."/>
            <person name="Wheeler D.A."/>
            <person name="Zhang Z."/>
            <person name="Bailey J.A."/>
            <person name="Eichler E.E."/>
            <person name="Tuzun E."/>
            <person name="Birney E."/>
            <person name="Mongin E."/>
            <person name="Ureta-Vidal A."/>
            <person name="Woodwark C."/>
            <person name="Zdobnov E."/>
            <person name="Bork P."/>
            <person name="Suyama M."/>
            <person name="Torrents D."/>
            <person name="Alexandersson M."/>
            <person name="Trask B.J."/>
            <person name="Young J.M."/>
            <person name="Huang H."/>
            <person name="Wang H."/>
            <person name="Xing H."/>
            <person name="Daniels S."/>
            <person name="Gietzen D."/>
            <person name="Schmidt J."/>
            <person name="Stevens K."/>
            <person name="Vitt U."/>
            <person name="Wingrove J."/>
            <person name="Camara F."/>
            <person name="Mar Alba M."/>
            <person name="Abril J.F."/>
            <person name="Guigo R."/>
            <person name="Smit A."/>
            <person name="Dubchak I."/>
            <person name="Rubin E.M."/>
            <person name="Couronne O."/>
            <person name="Poliakov A."/>
            <person name="Huebner N."/>
            <person name="Ganten D."/>
            <person name="Goesele C."/>
            <person name="Hummel O."/>
            <person name="Kreitler T."/>
            <person name="Lee Y.-A."/>
            <person name="Monti J."/>
            <person name="Schulz H."/>
            <person name="Zimdahl H."/>
            <person name="Himmelbauer H."/>
            <person name="Lehrach H."/>
            <person name="Jacob H.J."/>
            <person name="Bromberg S."/>
            <person name="Gullings-Handley J."/>
            <person name="Jensen-Seaman M.I."/>
            <person name="Kwitek A.E."/>
            <person name="Lazar J."/>
            <person name="Pasko D."/>
            <person name="Tonellato P.J."/>
            <person name="Twigger S."/>
            <person name="Ponting C.P."/>
            <person name="Duarte J.M."/>
            <person name="Rice S."/>
            <person name="Goodstadt L."/>
            <person name="Beatson S.A."/>
            <person name="Emes R.D."/>
            <person name="Winter E.E."/>
            <person name="Webber C."/>
            <person name="Brandt P."/>
            <person name="Nyakatura G."/>
            <person name="Adetobi M."/>
            <person name="Chiaromonte F."/>
            <person name="Elnitski L."/>
            <person name="Eswara P."/>
            <person name="Hardison R.C."/>
            <person name="Hou M."/>
            <person name="Kolbe D."/>
            <person name="Makova K."/>
            <person name="Miller W."/>
            <person name="Nekrutenko A."/>
            <person name="Riemer C."/>
            <person name="Schwartz S."/>
            <person name="Taylor J."/>
            <person name="Yang S."/>
            <person name="Zhang Y."/>
            <person name="Lindpaintner K."/>
            <person name="Andrews T.D."/>
            <person name="Caccamo M."/>
            <person name="Clamp M."/>
            <person name="Clarke L."/>
            <person name="Curwen V."/>
            <person name="Durbin R.M."/>
            <person name="Eyras E."/>
            <person name="Searle S.M."/>
            <person name="Cooper G.M."/>
            <person name="Batzoglou S."/>
            <person name="Brudno M."/>
            <person name="Sidow A."/>
            <person name="Stone E.A."/>
            <person name="Payseur B.A."/>
            <person name="Bourque G."/>
            <person name="Lopez-Otin C."/>
            <person name="Puente X.S."/>
            <person name="Chakrabarti K."/>
            <person name="Chatterji S."/>
            <person name="Dewey C."/>
            <person name="Pachter L."/>
            <person name="Bray N."/>
            <person name="Yap V.B."/>
            <person name="Caspi A."/>
            <person name="Tesler G."/>
            <person name="Pevzner P.A."/>
            <person name="Haussler D."/>
            <person name="Roskin K.M."/>
            <person name="Baertsch R."/>
            <person name="Clawson H."/>
            <person name="Furey T.S."/>
            <person name="Hinrichs A.S."/>
            <person name="Karolchik D."/>
            <person name="Kent W.J."/>
            <person name="Rosenbloom K.R."/>
            <person name="Trumbower H."/>
            <person name="Weirauch M."/>
            <person name="Cooper D.N."/>
            <person name="Stenson P.D."/>
            <person name="Ma B."/>
            <person name="Brent M."/>
            <person name="Arumugam M."/>
            <person name="Shteynberg D."/>
            <person name="Copley R.R."/>
            <person name="Taylor M.S."/>
            <person name="Riethman H."/>
            <person name="Mudunuri U."/>
            <person name="Peterson J."/>
            <person name="Guyer M."/>
            <person name="Felsenfeld A."/>
            <person name="Old S."/>
            <person name="Mockrin S."/>
            <person name="Collins F.S."/>
        </authorList>
    </citation>
    <scope>NUCLEOTIDE SEQUENCE [LARGE SCALE GENOMIC DNA]</scope>
    <source>
        <strain>Brown Norway</strain>
    </source>
</reference>
<reference key="2">
    <citation type="submission" date="2005-07" db="EMBL/GenBank/DDBJ databases">
        <authorList>
            <person name="Mural R.J."/>
            <person name="Adams M.D."/>
            <person name="Myers E.W."/>
            <person name="Smith H.O."/>
            <person name="Venter J.C."/>
        </authorList>
    </citation>
    <scope>NUCLEOTIDE SEQUENCE [LARGE SCALE GENOMIC DNA]</scope>
</reference>
<reference key="3">
    <citation type="journal article" date="2012" name="Nat. Commun.">
        <title>Quantitative maps of protein phosphorylation sites across 14 different rat organs and tissues.</title>
        <authorList>
            <person name="Lundby A."/>
            <person name="Secher A."/>
            <person name="Lage K."/>
            <person name="Nordsborg N.B."/>
            <person name="Dmytriyev A."/>
            <person name="Lundby C."/>
            <person name="Olsen J.V."/>
        </authorList>
    </citation>
    <scope>PHOSPHORYLATION [LARGE SCALE ANALYSIS] AT SER-87; SER-93; SER-97 AND SER-103</scope>
    <scope>IDENTIFICATION BY MASS SPECTROMETRY [LARGE SCALE ANALYSIS]</scope>
</reference>
<proteinExistence type="evidence at protein level"/>
<accession>D4AB98</accession>
<dbReference type="EMBL" id="CH473971">
    <property type="protein sequence ID" value="EDM14621.1"/>
    <property type="molecule type" value="Genomic_DNA"/>
</dbReference>
<dbReference type="RefSeq" id="NP_001099612.1">
    <property type="nucleotide sequence ID" value="NM_001106142.1"/>
</dbReference>
<dbReference type="SMR" id="D4AB98"/>
<dbReference type="FunCoup" id="D4AB98">
    <property type="interactions" value="401"/>
</dbReference>
<dbReference type="STRING" id="10116.ENSRNOP00000026495"/>
<dbReference type="iPTMnet" id="D4AB98"/>
<dbReference type="PhosphoSitePlus" id="D4AB98"/>
<dbReference type="PaxDb" id="10116-ENSRNOP00000026495"/>
<dbReference type="GeneID" id="291565"/>
<dbReference type="KEGG" id="rno:291565"/>
<dbReference type="AGR" id="RGD:1311580"/>
<dbReference type="CTD" id="134265"/>
<dbReference type="RGD" id="1311580">
    <property type="gene designation" value="Afap1l1"/>
</dbReference>
<dbReference type="VEuPathDB" id="HostDB:ENSRNOG00000019403"/>
<dbReference type="eggNOG" id="ENOG502R3HG">
    <property type="taxonomic scope" value="Eukaryota"/>
</dbReference>
<dbReference type="HOGENOM" id="CLU_014418_1_0_1"/>
<dbReference type="InParanoid" id="D4AB98"/>
<dbReference type="OrthoDB" id="67109at9989"/>
<dbReference type="PRO" id="PR:D4AB98"/>
<dbReference type="Proteomes" id="UP000002494">
    <property type="component" value="Chromosome 18"/>
</dbReference>
<dbReference type="Proteomes" id="UP000234681">
    <property type="component" value="Chromosome 18"/>
</dbReference>
<dbReference type="Bgee" id="ENSRNOG00000019403">
    <property type="expression patterns" value="Expressed in skeletal muscle tissue and 18 other cell types or tissues"/>
</dbReference>
<dbReference type="GO" id="GO:0070161">
    <property type="term" value="C:anchoring junction"/>
    <property type="evidence" value="ECO:0007669"/>
    <property type="project" value="UniProtKB-KW"/>
</dbReference>
<dbReference type="GO" id="GO:0042995">
    <property type="term" value="C:cell projection"/>
    <property type="evidence" value="ECO:0007669"/>
    <property type="project" value="UniProtKB-SubCell"/>
</dbReference>
<dbReference type="GO" id="GO:0005829">
    <property type="term" value="C:cytosol"/>
    <property type="evidence" value="ECO:0000318"/>
    <property type="project" value="GO_Central"/>
</dbReference>
<dbReference type="GO" id="GO:0002102">
    <property type="term" value="C:podosome"/>
    <property type="evidence" value="ECO:0007669"/>
    <property type="project" value="UniProtKB-SubCell"/>
</dbReference>
<dbReference type="CDD" id="cd13306">
    <property type="entry name" value="PH1_AFAP"/>
    <property type="match status" value="1"/>
</dbReference>
<dbReference type="CDD" id="cd13307">
    <property type="entry name" value="PH2_AFAP"/>
    <property type="match status" value="1"/>
</dbReference>
<dbReference type="FunFam" id="2.30.29.30:FF:000189">
    <property type="entry name" value="Actin filament associated protein 1-like 1"/>
    <property type="match status" value="1"/>
</dbReference>
<dbReference type="FunFam" id="2.30.29.30:FF:000020">
    <property type="entry name" value="Actin filament-associated protein 1-like 2 isoform 1"/>
    <property type="match status" value="1"/>
</dbReference>
<dbReference type="Gene3D" id="2.30.29.30">
    <property type="entry name" value="Pleckstrin-homology domain (PH domain)/Phosphotyrosine-binding domain (PTB)"/>
    <property type="match status" value="2"/>
</dbReference>
<dbReference type="InterPro" id="IPR030113">
    <property type="entry name" value="AFAP"/>
</dbReference>
<dbReference type="InterPro" id="IPR011993">
    <property type="entry name" value="PH-like_dom_sf"/>
</dbReference>
<dbReference type="InterPro" id="IPR001849">
    <property type="entry name" value="PH_domain"/>
</dbReference>
<dbReference type="PANTHER" id="PTHR14338">
    <property type="entry name" value="ACTIN FILAMENT-ASSOCIATED PROTEIN 1 FAMILY MEMBER"/>
    <property type="match status" value="1"/>
</dbReference>
<dbReference type="PANTHER" id="PTHR14338:SF1">
    <property type="entry name" value="ACTIN FILAMENT-ASSOCIATED PROTEIN 1-LIKE 1"/>
    <property type="match status" value="1"/>
</dbReference>
<dbReference type="Pfam" id="PF00169">
    <property type="entry name" value="PH"/>
    <property type="match status" value="2"/>
</dbReference>
<dbReference type="SMART" id="SM00233">
    <property type="entry name" value="PH"/>
    <property type="match status" value="2"/>
</dbReference>
<dbReference type="SUPFAM" id="SSF50729">
    <property type="entry name" value="PH domain-like"/>
    <property type="match status" value="2"/>
</dbReference>
<dbReference type="PROSITE" id="PS50003">
    <property type="entry name" value="PH_DOMAIN"/>
    <property type="match status" value="2"/>
</dbReference>